<proteinExistence type="inferred from homology"/>
<gene>
    <name type="ordered locus">Neut_1662</name>
</gene>
<feature type="chain" id="PRO_1000009238" description="UPF0102 protein Neut_1662">
    <location>
        <begin position="1"/>
        <end position="116"/>
    </location>
</feature>
<evidence type="ECO:0000255" key="1">
    <source>
        <dbReference type="HAMAP-Rule" id="MF_00048"/>
    </source>
</evidence>
<organism>
    <name type="scientific">Nitrosomonas eutropha (strain DSM 101675 / C91 / Nm57)</name>
    <dbReference type="NCBI Taxonomy" id="335283"/>
    <lineage>
        <taxon>Bacteria</taxon>
        <taxon>Pseudomonadati</taxon>
        <taxon>Pseudomonadota</taxon>
        <taxon>Betaproteobacteria</taxon>
        <taxon>Nitrosomonadales</taxon>
        <taxon>Nitrosomonadaceae</taxon>
        <taxon>Nitrosomonas</taxon>
    </lineage>
</organism>
<reference key="1">
    <citation type="journal article" date="2007" name="Environ. Microbiol.">
        <title>Whole-genome analysis of the ammonia-oxidizing bacterium, Nitrosomonas eutropha C91: implications for niche adaptation.</title>
        <authorList>
            <person name="Stein L.Y."/>
            <person name="Arp D.J."/>
            <person name="Berube P.M."/>
            <person name="Chain P.S."/>
            <person name="Hauser L."/>
            <person name="Jetten M.S."/>
            <person name="Klotz M.G."/>
            <person name="Larimer F.W."/>
            <person name="Norton J.M."/>
            <person name="Op den Camp H.J.M."/>
            <person name="Shin M."/>
            <person name="Wei X."/>
        </authorList>
    </citation>
    <scope>NUCLEOTIDE SEQUENCE [LARGE SCALE GENOMIC DNA]</scope>
    <source>
        <strain>DSM 101675 / C91 / Nm57</strain>
    </source>
</reference>
<accession>Q0AFH8</accession>
<name>Y1662_NITEC</name>
<sequence length="116" mass="13203">MSSTKNKGSDAEQQATIFLQQQQLTLLEKNYRCRFGEIDLIMQDGDTVVFVEVRMRVNQLFGGAAASITPAKQLKLTRAARHYLARCDEDFPCRFDAILISGNREIEWIQNAFDEG</sequence>
<comment type="similarity">
    <text evidence="1">Belongs to the UPF0102 family.</text>
</comment>
<protein>
    <recommendedName>
        <fullName evidence="1">UPF0102 protein Neut_1662</fullName>
    </recommendedName>
</protein>
<dbReference type="EMBL" id="CP000450">
    <property type="protein sequence ID" value="ABI59904.1"/>
    <property type="molecule type" value="Genomic_DNA"/>
</dbReference>
<dbReference type="RefSeq" id="WP_011634710.1">
    <property type="nucleotide sequence ID" value="NC_008344.1"/>
</dbReference>
<dbReference type="SMR" id="Q0AFH8"/>
<dbReference type="STRING" id="335283.Neut_1662"/>
<dbReference type="KEGG" id="net:Neut_1662"/>
<dbReference type="eggNOG" id="COG0792">
    <property type="taxonomic scope" value="Bacteria"/>
</dbReference>
<dbReference type="HOGENOM" id="CLU_115353_1_0_4"/>
<dbReference type="OrthoDB" id="9794876at2"/>
<dbReference type="Proteomes" id="UP000001966">
    <property type="component" value="Chromosome"/>
</dbReference>
<dbReference type="GO" id="GO:0003676">
    <property type="term" value="F:nucleic acid binding"/>
    <property type="evidence" value="ECO:0007669"/>
    <property type="project" value="InterPro"/>
</dbReference>
<dbReference type="Gene3D" id="3.40.1350.10">
    <property type="match status" value="1"/>
</dbReference>
<dbReference type="HAMAP" id="MF_00048">
    <property type="entry name" value="UPF0102"/>
    <property type="match status" value="1"/>
</dbReference>
<dbReference type="InterPro" id="IPR011335">
    <property type="entry name" value="Restrct_endonuc-II-like"/>
</dbReference>
<dbReference type="InterPro" id="IPR011856">
    <property type="entry name" value="tRNA_endonuc-like_dom_sf"/>
</dbReference>
<dbReference type="InterPro" id="IPR003509">
    <property type="entry name" value="UPF0102_YraN-like"/>
</dbReference>
<dbReference type="NCBIfam" id="NF009150">
    <property type="entry name" value="PRK12497.1-3"/>
    <property type="match status" value="1"/>
</dbReference>
<dbReference type="NCBIfam" id="TIGR00252">
    <property type="entry name" value="YraN family protein"/>
    <property type="match status" value="1"/>
</dbReference>
<dbReference type="PANTHER" id="PTHR34039">
    <property type="entry name" value="UPF0102 PROTEIN YRAN"/>
    <property type="match status" value="1"/>
</dbReference>
<dbReference type="PANTHER" id="PTHR34039:SF1">
    <property type="entry name" value="UPF0102 PROTEIN YRAN"/>
    <property type="match status" value="1"/>
</dbReference>
<dbReference type="Pfam" id="PF02021">
    <property type="entry name" value="UPF0102"/>
    <property type="match status" value="1"/>
</dbReference>
<dbReference type="SUPFAM" id="SSF52980">
    <property type="entry name" value="Restriction endonuclease-like"/>
    <property type="match status" value="1"/>
</dbReference>